<name>NFI_THENN</name>
<feature type="chain" id="PRO_1000148540" description="Endonuclease V">
    <location>
        <begin position="1"/>
        <end position="225"/>
    </location>
</feature>
<feature type="binding site" evidence="1">
    <location>
        <position position="43"/>
    </location>
    <ligand>
        <name>Mg(2+)</name>
        <dbReference type="ChEBI" id="CHEBI:18420"/>
    </ligand>
</feature>
<feature type="binding site" evidence="1">
    <location>
        <position position="110"/>
    </location>
    <ligand>
        <name>Mg(2+)</name>
        <dbReference type="ChEBI" id="CHEBI:18420"/>
    </ligand>
</feature>
<feature type="site" description="Interaction with target DNA" evidence="1">
    <location>
        <position position="80"/>
    </location>
</feature>
<organism>
    <name type="scientific">Thermotoga neapolitana (strain ATCC 49049 / DSM 4359 / NBRC 107923 / NS-E)</name>
    <dbReference type="NCBI Taxonomy" id="309803"/>
    <lineage>
        <taxon>Bacteria</taxon>
        <taxon>Thermotogati</taxon>
        <taxon>Thermotogota</taxon>
        <taxon>Thermotogae</taxon>
        <taxon>Thermotogales</taxon>
        <taxon>Thermotogaceae</taxon>
        <taxon>Thermotoga</taxon>
    </lineage>
</organism>
<proteinExistence type="inferred from homology"/>
<gene>
    <name evidence="1" type="primary">nfi</name>
    <name type="ordered locus">CTN_0800</name>
</gene>
<keyword id="KW-0963">Cytoplasm</keyword>
<keyword id="KW-0227">DNA damage</keyword>
<keyword id="KW-0234">DNA repair</keyword>
<keyword id="KW-0255">Endonuclease</keyword>
<keyword id="KW-0378">Hydrolase</keyword>
<keyword id="KW-0460">Magnesium</keyword>
<keyword id="KW-0479">Metal-binding</keyword>
<keyword id="KW-0540">Nuclease</keyword>
<comment type="function">
    <text evidence="1">DNA repair enzyme involved in the repair of deaminated bases. Selectively cleaves double-stranded DNA at the second phosphodiester bond 3' to a deoxyinosine leaving behind the intact lesion on the nicked DNA.</text>
</comment>
<comment type="catalytic activity">
    <reaction evidence="1">
        <text>Endonucleolytic cleavage at apurinic or apyrimidinic sites to products with a 5'-phosphate.</text>
        <dbReference type="EC" id="3.1.21.7"/>
    </reaction>
</comment>
<comment type="cofactor">
    <cofactor evidence="1">
        <name>Mg(2+)</name>
        <dbReference type="ChEBI" id="CHEBI:18420"/>
    </cofactor>
</comment>
<comment type="subcellular location">
    <subcellularLocation>
        <location evidence="1">Cytoplasm</location>
    </subcellularLocation>
</comment>
<comment type="similarity">
    <text evidence="1">Belongs to the endonuclease V family.</text>
</comment>
<sequence length="225" mass="25812">MTYKKLHEWDLSPEEAMKIQNVLREKILFKPFEGEPKYVAGVDLSFPKREEGLAVIVVMEYPTFKIVELVSERGKVDFPYIPGLLAFREGPLFLKAWEKLKTKPDVVVFDGQGIAHPRKLGIASHMGLFIEIPTIGVAKSRLYGTYREPENRRCSWSYLYDNEEIIGCVMRTREGSAPIFVSPGHLIDVESSIRLVKSFTLPGRRLPEPTRMAHIYTQRLKKGLF</sequence>
<accession>B9K7P3</accession>
<dbReference type="EC" id="3.1.21.7" evidence="1"/>
<dbReference type="EMBL" id="CP000916">
    <property type="protein sequence ID" value="ACM22976.1"/>
    <property type="molecule type" value="Genomic_DNA"/>
</dbReference>
<dbReference type="RefSeq" id="WP_015919293.1">
    <property type="nucleotide sequence ID" value="NC_011978.1"/>
</dbReference>
<dbReference type="SMR" id="B9K7P3"/>
<dbReference type="STRING" id="309803.CTN_0800"/>
<dbReference type="KEGG" id="tna:CTN_0800"/>
<dbReference type="eggNOG" id="COG1515">
    <property type="taxonomic scope" value="Bacteria"/>
</dbReference>
<dbReference type="HOGENOM" id="CLU_047631_1_1_0"/>
<dbReference type="Proteomes" id="UP000000445">
    <property type="component" value="Chromosome"/>
</dbReference>
<dbReference type="GO" id="GO:0005737">
    <property type="term" value="C:cytoplasm"/>
    <property type="evidence" value="ECO:0007669"/>
    <property type="project" value="UniProtKB-SubCell"/>
</dbReference>
<dbReference type="GO" id="GO:0043737">
    <property type="term" value="F:deoxyribonuclease V activity"/>
    <property type="evidence" value="ECO:0007669"/>
    <property type="project" value="UniProtKB-UniRule"/>
</dbReference>
<dbReference type="GO" id="GO:0000287">
    <property type="term" value="F:magnesium ion binding"/>
    <property type="evidence" value="ECO:0007669"/>
    <property type="project" value="UniProtKB-UniRule"/>
</dbReference>
<dbReference type="GO" id="GO:0016891">
    <property type="term" value="F:RNA endonuclease activity, producing 5'-phosphomonoesters"/>
    <property type="evidence" value="ECO:0007669"/>
    <property type="project" value="TreeGrafter"/>
</dbReference>
<dbReference type="GO" id="GO:0003727">
    <property type="term" value="F:single-stranded RNA binding"/>
    <property type="evidence" value="ECO:0007669"/>
    <property type="project" value="TreeGrafter"/>
</dbReference>
<dbReference type="GO" id="GO:0006281">
    <property type="term" value="P:DNA repair"/>
    <property type="evidence" value="ECO:0007669"/>
    <property type="project" value="UniProtKB-UniRule"/>
</dbReference>
<dbReference type="CDD" id="cd06559">
    <property type="entry name" value="Endonuclease_V"/>
    <property type="match status" value="1"/>
</dbReference>
<dbReference type="FunFam" id="3.30.2170.10:FF:000008">
    <property type="entry name" value="Endonuclease V"/>
    <property type="match status" value="1"/>
</dbReference>
<dbReference type="Gene3D" id="3.30.2170.10">
    <property type="entry name" value="archaeoglobus fulgidus dsm 4304 superfamily"/>
    <property type="match status" value="1"/>
</dbReference>
<dbReference type="HAMAP" id="MF_00801">
    <property type="entry name" value="Endonuclease_5"/>
    <property type="match status" value="1"/>
</dbReference>
<dbReference type="InterPro" id="IPR007581">
    <property type="entry name" value="Endonuclease-V"/>
</dbReference>
<dbReference type="InterPro" id="IPR053396">
    <property type="entry name" value="Endonuclease_V-like"/>
</dbReference>
<dbReference type="NCBIfam" id="NF041102">
    <property type="entry name" value="endonuc_V_Ttgales"/>
    <property type="match status" value="1"/>
</dbReference>
<dbReference type="NCBIfam" id="NF008629">
    <property type="entry name" value="PRK11617.1"/>
    <property type="match status" value="1"/>
</dbReference>
<dbReference type="PANTHER" id="PTHR28511">
    <property type="entry name" value="ENDONUCLEASE V"/>
    <property type="match status" value="1"/>
</dbReference>
<dbReference type="PANTHER" id="PTHR28511:SF1">
    <property type="entry name" value="ENDONUCLEASE V"/>
    <property type="match status" value="1"/>
</dbReference>
<dbReference type="Pfam" id="PF04493">
    <property type="entry name" value="Endonuclease_5"/>
    <property type="match status" value="1"/>
</dbReference>
<reference key="1">
    <citation type="submission" date="2007-11" db="EMBL/GenBank/DDBJ databases">
        <title>The genome sequence of the hyperthermophilic bacterium Thermotoga neapolitana.</title>
        <authorList>
            <person name="Lim S.K."/>
            <person name="Kim J.S."/>
            <person name="Cha S.H."/>
            <person name="Park B.C."/>
            <person name="Lee D.S."/>
            <person name="Tae H.S."/>
            <person name="Kim S.-J."/>
            <person name="Kim J.J."/>
            <person name="Park K.J."/>
            <person name="Lee S.Y."/>
        </authorList>
    </citation>
    <scope>NUCLEOTIDE SEQUENCE [LARGE SCALE GENOMIC DNA]</scope>
    <source>
        <strain>ATCC 49049 / DSM 4359 / NBRC 107923 / NS-E</strain>
    </source>
</reference>
<evidence type="ECO:0000255" key="1">
    <source>
        <dbReference type="HAMAP-Rule" id="MF_00801"/>
    </source>
</evidence>
<protein>
    <recommendedName>
        <fullName evidence="1">Endonuclease V</fullName>
        <ecNumber evidence="1">3.1.21.7</ecNumber>
    </recommendedName>
    <alternativeName>
        <fullName evidence="1">Deoxyinosine 3'endonuclease</fullName>
    </alternativeName>
    <alternativeName>
        <fullName evidence="1">Deoxyribonuclease V</fullName>
        <shortName evidence="1">DNase V</shortName>
    </alternativeName>
</protein>